<sequence>MYQPDFPTVPFRLGLYPVVDSVAWIERLLEAGVRTIQLRIKDKRDEEVEADVIAAIALGRRYDARLFINDYWRLAIKHRAYGVHLGQEDLETTDLKAIQAAGLRLGVSTHDDMEIDVALAAKPSYIALGHVFPTQTKQMPSAPQGLAQLARHIDRLADYPTVAIGGISVERAPAVLATGVGSIAVVSAITQAADWRAATAQLLDIAGVGDE</sequence>
<dbReference type="EC" id="2.5.1.3" evidence="1"/>
<dbReference type="EMBL" id="CP001113">
    <property type="protein sequence ID" value="ACF61562.1"/>
    <property type="molecule type" value="Genomic_DNA"/>
</dbReference>
<dbReference type="RefSeq" id="WP_000284634.1">
    <property type="nucleotide sequence ID" value="NZ_CCMR01000001.1"/>
</dbReference>
<dbReference type="SMR" id="B4T0Z5"/>
<dbReference type="KEGG" id="see:SNSL254_A4495"/>
<dbReference type="HOGENOM" id="CLU_018272_3_3_6"/>
<dbReference type="UniPathway" id="UPA00060">
    <property type="reaction ID" value="UER00141"/>
</dbReference>
<dbReference type="Proteomes" id="UP000008824">
    <property type="component" value="Chromosome"/>
</dbReference>
<dbReference type="GO" id="GO:0005737">
    <property type="term" value="C:cytoplasm"/>
    <property type="evidence" value="ECO:0007669"/>
    <property type="project" value="TreeGrafter"/>
</dbReference>
<dbReference type="GO" id="GO:0000287">
    <property type="term" value="F:magnesium ion binding"/>
    <property type="evidence" value="ECO:0007669"/>
    <property type="project" value="UniProtKB-UniRule"/>
</dbReference>
<dbReference type="GO" id="GO:0004789">
    <property type="term" value="F:thiamine-phosphate diphosphorylase activity"/>
    <property type="evidence" value="ECO:0007669"/>
    <property type="project" value="UniProtKB-UniRule"/>
</dbReference>
<dbReference type="GO" id="GO:0009228">
    <property type="term" value="P:thiamine biosynthetic process"/>
    <property type="evidence" value="ECO:0007669"/>
    <property type="project" value="UniProtKB-KW"/>
</dbReference>
<dbReference type="GO" id="GO:0009229">
    <property type="term" value="P:thiamine diphosphate biosynthetic process"/>
    <property type="evidence" value="ECO:0007669"/>
    <property type="project" value="UniProtKB-UniRule"/>
</dbReference>
<dbReference type="CDD" id="cd00564">
    <property type="entry name" value="TMP_TenI"/>
    <property type="match status" value="1"/>
</dbReference>
<dbReference type="FunFam" id="3.20.20.70:FF:000064">
    <property type="entry name" value="Thiamine-phosphate synthase"/>
    <property type="match status" value="1"/>
</dbReference>
<dbReference type="Gene3D" id="3.20.20.70">
    <property type="entry name" value="Aldolase class I"/>
    <property type="match status" value="1"/>
</dbReference>
<dbReference type="HAMAP" id="MF_00097">
    <property type="entry name" value="TMP_synthase"/>
    <property type="match status" value="1"/>
</dbReference>
<dbReference type="InterPro" id="IPR013785">
    <property type="entry name" value="Aldolase_TIM"/>
</dbReference>
<dbReference type="InterPro" id="IPR036206">
    <property type="entry name" value="ThiamineP_synth_sf"/>
</dbReference>
<dbReference type="InterPro" id="IPR022998">
    <property type="entry name" value="ThiamineP_synth_TenI"/>
</dbReference>
<dbReference type="InterPro" id="IPR034291">
    <property type="entry name" value="TMP_synthase"/>
</dbReference>
<dbReference type="NCBIfam" id="NF002904">
    <property type="entry name" value="PRK03512.1"/>
    <property type="match status" value="1"/>
</dbReference>
<dbReference type="NCBIfam" id="TIGR00693">
    <property type="entry name" value="thiE"/>
    <property type="match status" value="1"/>
</dbReference>
<dbReference type="PANTHER" id="PTHR20857">
    <property type="entry name" value="THIAMINE-PHOSPHATE PYROPHOSPHORYLASE"/>
    <property type="match status" value="1"/>
</dbReference>
<dbReference type="PANTHER" id="PTHR20857:SF15">
    <property type="entry name" value="THIAMINE-PHOSPHATE SYNTHASE"/>
    <property type="match status" value="1"/>
</dbReference>
<dbReference type="Pfam" id="PF02581">
    <property type="entry name" value="TMP-TENI"/>
    <property type="match status" value="1"/>
</dbReference>
<dbReference type="SUPFAM" id="SSF51391">
    <property type="entry name" value="Thiamin phosphate synthase"/>
    <property type="match status" value="1"/>
</dbReference>
<feature type="chain" id="PRO_1000093688" description="Thiamine-phosphate synthase">
    <location>
        <begin position="1"/>
        <end position="211"/>
    </location>
</feature>
<feature type="binding site" evidence="1">
    <location>
        <begin position="37"/>
        <end position="41"/>
    </location>
    <ligand>
        <name>4-amino-2-methyl-5-(diphosphooxymethyl)pyrimidine</name>
        <dbReference type="ChEBI" id="CHEBI:57841"/>
    </ligand>
</feature>
<feature type="binding site" evidence="1">
    <location>
        <position position="69"/>
    </location>
    <ligand>
        <name>4-amino-2-methyl-5-(diphosphooxymethyl)pyrimidine</name>
        <dbReference type="ChEBI" id="CHEBI:57841"/>
    </ligand>
</feature>
<feature type="binding site" evidence="1">
    <location>
        <position position="70"/>
    </location>
    <ligand>
        <name>Mg(2+)</name>
        <dbReference type="ChEBI" id="CHEBI:18420"/>
    </ligand>
</feature>
<feature type="binding site" evidence="1">
    <location>
        <position position="89"/>
    </location>
    <ligand>
        <name>Mg(2+)</name>
        <dbReference type="ChEBI" id="CHEBI:18420"/>
    </ligand>
</feature>
<feature type="binding site" evidence="1">
    <location>
        <position position="108"/>
    </location>
    <ligand>
        <name>4-amino-2-methyl-5-(diphosphooxymethyl)pyrimidine</name>
        <dbReference type="ChEBI" id="CHEBI:57841"/>
    </ligand>
</feature>
<feature type="binding site" evidence="1">
    <location>
        <begin position="134"/>
        <end position="136"/>
    </location>
    <ligand>
        <name>2-[(2R,5Z)-2-carboxy-4-methylthiazol-5(2H)-ylidene]ethyl phosphate</name>
        <dbReference type="ChEBI" id="CHEBI:62899"/>
    </ligand>
</feature>
<feature type="binding site" evidence="1">
    <location>
        <position position="137"/>
    </location>
    <ligand>
        <name>4-amino-2-methyl-5-(diphosphooxymethyl)pyrimidine</name>
        <dbReference type="ChEBI" id="CHEBI:57841"/>
    </ligand>
</feature>
<feature type="binding site" evidence="1">
    <location>
        <position position="166"/>
    </location>
    <ligand>
        <name>2-[(2R,5Z)-2-carboxy-4-methylthiazol-5(2H)-ylidene]ethyl phosphate</name>
        <dbReference type="ChEBI" id="CHEBI:62899"/>
    </ligand>
</feature>
<feature type="binding site" evidence="1">
    <location>
        <begin position="186"/>
        <end position="187"/>
    </location>
    <ligand>
        <name>2-[(2R,5Z)-2-carboxy-4-methylthiazol-5(2H)-ylidene]ethyl phosphate</name>
        <dbReference type="ChEBI" id="CHEBI:62899"/>
    </ligand>
</feature>
<protein>
    <recommendedName>
        <fullName evidence="1">Thiamine-phosphate synthase</fullName>
        <shortName evidence="1">TP synthase</shortName>
        <shortName evidence="1">TPS</shortName>
        <ecNumber evidence="1">2.5.1.3</ecNumber>
    </recommendedName>
    <alternativeName>
        <fullName evidence="1">Thiamine-phosphate pyrophosphorylase</fullName>
        <shortName evidence="1">TMP pyrophosphorylase</shortName>
        <shortName evidence="1">TMP-PPase</shortName>
    </alternativeName>
</protein>
<proteinExistence type="inferred from homology"/>
<evidence type="ECO:0000255" key="1">
    <source>
        <dbReference type="HAMAP-Rule" id="MF_00097"/>
    </source>
</evidence>
<gene>
    <name evidence="1" type="primary">thiE</name>
    <name type="ordered locus">SNSL254_A4495</name>
</gene>
<accession>B4T0Z5</accession>
<organism>
    <name type="scientific">Salmonella newport (strain SL254)</name>
    <dbReference type="NCBI Taxonomy" id="423368"/>
    <lineage>
        <taxon>Bacteria</taxon>
        <taxon>Pseudomonadati</taxon>
        <taxon>Pseudomonadota</taxon>
        <taxon>Gammaproteobacteria</taxon>
        <taxon>Enterobacterales</taxon>
        <taxon>Enterobacteriaceae</taxon>
        <taxon>Salmonella</taxon>
    </lineage>
</organism>
<reference key="1">
    <citation type="journal article" date="2011" name="J. Bacteriol.">
        <title>Comparative genomics of 28 Salmonella enterica isolates: evidence for CRISPR-mediated adaptive sublineage evolution.</title>
        <authorList>
            <person name="Fricke W.F."/>
            <person name="Mammel M.K."/>
            <person name="McDermott P.F."/>
            <person name="Tartera C."/>
            <person name="White D.G."/>
            <person name="Leclerc J.E."/>
            <person name="Ravel J."/>
            <person name="Cebula T.A."/>
        </authorList>
    </citation>
    <scope>NUCLEOTIDE SEQUENCE [LARGE SCALE GENOMIC DNA]</scope>
    <source>
        <strain>SL254</strain>
    </source>
</reference>
<keyword id="KW-0460">Magnesium</keyword>
<keyword id="KW-0479">Metal-binding</keyword>
<keyword id="KW-0784">Thiamine biosynthesis</keyword>
<keyword id="KW-0808">Transferase</keyword>
<comment type="function">
    <text evidence="1">Condenses 4-methyl-5-(beta-hydroxyethyl)thiazole monophosphate (THZ-P) and 2-methyl-4-amino-5-hydroxymethyl pyrimidine pyrophosphate (HMP-PP) to form thiamine monophosphate (TMP).</text>
</comment>
<comment type="catalytic activity">
    <reaction evidence="1">
        <text>2-[(2R,5Z)-2-carboxy-4-methylthiazol-5(2H)-ylidene]ethyl phosphate + 4-amino-2-methyl-5-(diphosphooxymethyl)pyrimidine + 2 H(+) = thiamine phosphate + CO2 + diphosphate</text>
        <dbReference type="Rhea" id="RHEA:47844"/>
        <dbReference type="ChEBI" id="CHEBI:15378"/>
        <dbReference type="ChEBI" id="CHEBI:16526"/>
        <dbReference type="ChEBI" id="CHEBI:33019"/>
        <dbReference type="ChEBI" id="CHEBI:37575"/>
        <dbReference type="ChEBI" id="CHEBI:57841"/>
        <dbReference type="ChEBI" id="CHEBI:62899"/>
        <dbReference type="EC" id="2.5.1.3"/>
    </reaction>
</comment>
<comment type="catalytic activity">
    <reaction evidence="1">
        <text>2-(2-carboxy-4-methylthiazol-5-yl)ethyl phosphate + 4-amino-2-methyl-5-(diphosphooxymethyl)pyrimidine + 2 H(+) = thiamine phosphate + CO2 + diphosphate</text>
        <dbReference type="Rhea" id="RHEA:47848"/>
        <dbReference type="ChEBI" id="CHEBI:15378"/>
        <dbReference type="ChEBI" id="CHEBI:16526"/>
        <dbReference type="ChEBI" id="CHEBI:33019"/>
        <dbReference type="ChEBI" id="CHEBI:37575"/>
        <dbReference type="ChEBI" id="CHEBI:57841"/>
        <dbReference type="ChEBI" id="CHEBI:62890"/>
        <dbReference type="EC" id="2.5.1.3"/>
    </reaction>
</comment>
<comment type="catalytic activity">
    <reaction evidence="1">
        <text>4-methyl-5-(2-phosphooxyethyl)-thiazole + 4-amino-2-methyl-5-(diphosphooxymethyl)pyrimidine + H(+) = thiamine phosphate + diphosphate</text>
        <dbReference type="Rhea" id="RHEA:22328"/>
        <dbReference type="ChEBI" id="CHEBI:15378"/>
        <dbReference type="ChEBI" id="CHEBI:33019"/>
        <dbReference type="ChEBI" id="CHEBI:37575"/>
        <dbReference type="ChEBI" id="CHEBI:57841"/>
        <dbReference type="ChEBI" id="CHEBI:58296"/>
        <dbReference type="EC" id="2.5.1.3"/>
    </reaction>
</comment>
<comment type="cofactor">
    <cofactor evidence="1">
        <name>Mg(2+)</name>
        <dbReference type="ChEBI" id="CHEBI:18420"/>
    </cofactor>
    <text evidence="1">Binds 1 Mg(2+) ion per subunit.</text>
</comment>
<comment type="pathway">
    <text evidence="1">Cofactor biosynthesis; thiamine diphosphate biosynthesis; thiamine phosphate from 4-amino-2-methyl-5-diphosphomethylpyrimidine and 4-methyl-5-(2-phosphoethyl)-thiazole: step 1/1.</text>
</comment>
<comment type="similarity">
    <text evidence="1">Belongs to the thiamine-phosphate synthase family.</text>
</comment>
<name>THIE_SALNS</name>